<dbReference type="EMBL" id="AP008208">
    <property type="protein sequence ID" value="BAF08871.2"/>
    <property type="molecule type" value="Genomic_DNA"/>
</dbReference>
<dbReference type="EMBL" id="AP014958">
    <property type="protein sequence ID" value="BAS78900.1"/>
    <property type="status" value="ALT_INIT"/>
    <property type="molecule type" value="Genomic_DNA"/>
</dbReference>
<dbReference type="RefSeq" id="NP_001403556.1">
    <molecule id="Q0E0W7-1"/>
    <property type="nucleotide sequence ID" value="NM_001416627.1"/>
</dbReference>
<dbReference type="RefSeq" id="XP_015624053.1">
    <property type="nucleotide sequence ID" value="XM_015768567.1"/>
</dbReference>
<dbReference type="STRING" id="39947.A0A0P0VJQ3"/>
<dbReference type="PaxDb" id="39947-A0A0P0VJQ3"/>
<dbReference type="EnsemblPlants" id="Os02t0516400-01">
    <molecule id="Q0E0W7-1"/>
    <property type="protein sequence ID" value="Os02t0516400-01"/>
    <property type="gene ID" value="Os02g0516400"/>
</dbReference>
<dbReference type="GeneID" id="4329477"/>
<dbReference type="Gramene" id="Os02t0516400-01">
    <molecule id="Q0E0W7-1"/>
    <property type="protein sequence ID" value="Os02t0516400-01"/>
    <property type="gene ID" value="Os02g0516400"/>
</dbReference>
<dbReference type="KEGG" id="dosa:Os02g0516400"/>
<dbReference type="eggNOG" id="ENOG502RXWN">
    <property type="taxonomic scope" value="Eukaryota"/>
</dbReference>
<dbReference type="OrthoDB" id="1930512at2759"/>
<dbReference type="Proteomes" id="UP000000763">
    <property type="component" value="Chromosome 2"/>
</dbReference>
<dbReference type="Proteomes" id="UP000059680">
    <property type="component" value="Chromosome 2"/>
</dbReference>
<dbReference type="GO" id="GO:0005524">
    <property type="term" value="F:ATP binding"/>
    <property type="evidence" value="ECO:0007669"/>
    <property type="project" value="UniProtKB-KW"/>
</dbReference>
<dbReference type="GO" id="GO:0004386">
    <property type="term" value="F:helicase activity"/>
    <property type="evidence" value="ECO:0007669"/>
    <property type="project" value="UniProtKB-KW"/>
</dbReference>
<dbReference type="GO" id="GO:0016787">
    <property type="term" value="F:hydrolase activity"/>
    <property type="evidence" value="ECO:0007669"/>
    <property type="project" value="UniProtKB-KW"/>
</dbReference>
<dbReference type="GO" id="GO:0042335">
    <property type="term" value="P:cuticle development"/>
    <property type="evidence" value="ECO:0000315"/>
    <property type="project" value="UniProtKB"/>
</dbReference>
<dbReference type="Gene3D" id="2.20.70.10">
    <property type="match status" value="1"/>
</dbReference>
<dbReference type="InterPro" id="IPR036020">
    <property type="entry name" value="WW_dom_sf"/>
</dbReference>
<dbReference type="InterPro" id="IPR051105">
    <property type="entry name" value="WWC/KIBRA_Hippo_Reg"/>
</dbReference>
<dbReference type="PANTHER" id="PTHR14791">
    <property type="entry name" value="BOMB/KIRA PROTEINS"/>
    <property type="match status" value="1"/>
</dbReference>
<dbReference type="PANTHER" id="PTHR14791:SF29">
    <property type="entry name" value="PROTEIN KIBRA"/>
    <property type="match status" value="1"/>
</dbReference>
<dbReference type="SUPFAM" id="SSF51045">
    <property type="entry name" value="WW domain"/>
    <property type="match status" value="1"/>
</dbReference>
<sequence length="274" mass="27696">MTAPNIEMIASSLRNCSLNGGGGGGGGRRRGRRAAAAEGSDDSEGVTVELNSEVALPYHWEQCLDIRTGQVYYINWEDGTRTTIDPRSSSAYSPSPASRSASSSSRRCSRARGRGGGGGAAAAASTTTSSGYTSVSSVGAVTAAAAAWRSHDSSGHGYGYGYGYGSYGYGYGYDGRDGDDEESSSSSSSSSSSSSSASSSRGSAVSSTLSSFSPTDESASGAGSGYAVGDNGAHVLVAAGCRACFMYFMVPKTADVCPKCGSSGLLHLSRNGYV</sequence>
<feature type="chain" id="PRO_0000456304" description="Protein CURLY FLAG LEAF 1">
    <location>
        <begin position="1"/>
        <end position="274"/>
    </location>
</feature>
<feature type="domain" description="WW" evidence="3">
    <location>
        <begin position="54"/>
        <end position="88"/>
    </location>
</feature>
<feature type="region of interest" description="Disordered" evidence="4">
    <location>
        <begin position="17"/>
        <end position="44"/>
    </location>
</feature>
<feature type="region of interest" description="Disordered" evidence="4">
    <location>
        <begin position="83"/>
        <end position="133"/>
    </location>
</feature>
<feature type="region of interest" description="Disordered" evidence="4">
    <location>
        <begin position="175"/>
        <end position="216"/>
    </location>
</feature>
<feature type="short sequence motif" description="EAR" evidence="2">
    <location>
        <begin position="47"/>
        <end position="52"/>
    </location>
</feature>
<feature type="compositionally biased region" description="Low complexity" evidence="4">
    <location>
        <begin position="87"/>
        <end position="106"/>
    </location>
</feature>
<feature type="compositionally biased region" description="Low complexity" evidence="4">
    <location>
        <begin position="121"/>
        <end position="133"/>
    </location>
</feature>
<feature type="compositionally biased region" description="Low complexity" evidence="4">
    <location>
        <begin position="184"/>
        <end position="207"/>
    </location>
</feature>
<feature type="splice variant" id="VSP_061605" description="In isoform 2.">
    <location>
        <begin position="136"/>
        <end position="165"/>
    </location>
</feature>
<gene>
    <name evidence="6" type="primary">CFL1</name>
    <name evidence="7" type="ordered locus">Os02g0516400</name>
    <name evidence="7" type="ordered locus">LOC_Os02g31140</name>
    <name evidence="8" type="ORF">OSNPB_020516400</name>
</gene>
<reference key="1">
    <citation type="journal article" date="2005" name="Nature">
        <title>The map-based sequence of the rice genome.</title>
        <authorList>
            <consortium name="International rice genome sequencing project (IRGSP)"/>
        </authorList>
    </citation>
    <scope>NUCLEOTIDE SEQUENCE [LARGE SCALE GENOMIC DNA]</scope>
    <source>
        <strain>cv. Nipponbare</strain>
    </source>
</reference>
<reference key="2">
    <citation type="journal article" date="2008" name="Nucleic Acids Res.">
        <title>The rice annotation project database (RAP-DB): 2008 update.</title>
        <authorList>
            <consortium name="The rice annotation project (RAP)"/>
        </authorList>
    </citation>
    <scope>GENOME REANNOTATION</scope>
    <source>
        <strain>cv. Nipponbare</strain>
    </source>
</reference>
<reference key="3">
    <citation type="journal article" date="2013" name="Rice">
        <title>Improvement of the Oryza sativa Nipponbare reference genome using next generation sequence and optical map data.</title>
        <authorList>
            <person name="Kawahara Y."/>
            <person name="de la Bastide M."/>
            <person name="Hamilton J.P."/>
            <person name="Kanamori H."/>
            <person name="McCombie W.R."/>
            <person name="Ouyang S."/>
            <person name="Schwartz D.C."/>
            <person name="Tanaka T."/>
            <person name="Wu J."/>
            <person name="Zhou S."/>
            <person name="Childs K.L."/>
            <person name="Davidson R.M."/>
            <person name="Lin H."/>
            <person name="Quesada-Ocampo L."/>
            <person name="Vaillancourt B."/>
            <person name="Sakai H."/>
            <person name="Lee S.S."/>
            <person name="Kim J."/>
            <person name="Numa H."/>
            <person name="Itoh T."/>
            <person name="Buell C.R."/>
            <person name="Matsumoto T."/>
        </authorList>
    </citation>
    <scope>GENOME REANNOTATION</scope>
    <source>
        <strain>cv. Nipponbare</strain>
    </source>
</reference>
<reference key="4">
    <citation type="journal article" date="2011" name="Plant Cell">
        <title>CFL1, a WW domain protein, regulates cuticle development by modulating the function of HDG1, a class IV homeodomain transcription factor, in rice and Arabidopsis.</title>
        <authorList>
            <person name="Wu R."/>
            <person name="Li S."/>
            <person name="He S."/>
            <person name="Wassmann F."/>
            <person name="Yu C."/>
            <person name="Qin G."/>
            <person name="Schreiber L."/>
            <person name="Qu L.-J."/>
            <person name="Gu H."/>
        </authorList>
    </citation>
    <scope>FUNCTION</scope>
    <source>
        <strain>cv. Zhonghua 11</strain>
    </source>
</reference>
<organism>
    <name type="scientific">Oryza sativa subsp. japonica</name>
    <name type="common">Rice</name>
    <dbReference type="NCBI Taxonomy" id="39947"/>
    <lineage>
        <taxon>Eukaryota</taxon>
        <taxon>Viridiplantae</taxon>
        <taxon>Streptophyta</taxon>
        <taxon>Embryophyta</taxon>
        <taxon>Tracheophyta</taxon>
        <taxon>Spermatophyta</taxon>
        <taxon>Magnoliopsida</taxon>
        <taxon>Liliopsida</taxon>
        <taxon>Poales</taxon>
        <taxon>Poaceae</taxon>
        <taxon>BOP clade</taxon>
        <taxon>Oryzoideae</taxon>
        <taxon>Oryzeae</taxon>
        <taxon>Oryzinae</taxon>
        <taxon>Oryza</taxon>
        <taxon>Oryza sativa</taxon>
    </lineage>
</organism>
<accession>Q0E0W7</accession>
<accession>A0A0P0VJQ3</accession>
<keyword id="KW-0025">Alternative splicing</keyword>
<keyword id="KW-0067">ATP-binding</keyword>
<keyword id="KW-0347">Helicase</keyword>
<keyword id="KW-0378">Hydrolase</keyword>
<keyword id="KW-0547">Nucleotide-binding</keyword>
<keyword id="KW-1185">Reference proteome</keyword>
<protein>
    <recommendedName>
        <fullName evidence="6">Protein CURLY FLAG LEAF 1</fullName>
        <shortName evidence="6">OsCFL1</shortName>
    </recommendedName>
</protein>
<name>CFL1_ORYSJ</name>
<proteinExistence type="inferred from homology"/>
<comment type="function">
    <text evidence="5">Negatively regulates the cuticle development probably by interacting with the HD-ZIP IV transcription factor HDG1.</text>
</comment>
<comment type="subunit">
    <text evidence="1">Binds to HDG1.</text>
</comment>
<comment type="alternative products">
    <event type="alternative splicing"/>
    <isoform>
        <id>Q0E0W7-1</id>
        <name>1</name>
        <sequence type="displayed"/>
    </isoform>
    <isoform>
        <id>Q0E0W7-2</id>
        <name>2</name>
        <sequence type="described" ref="VSP_061605"/>
    </isoform>
</comment>
<comment type="sequence caution" evidence="7">
    <conflict type="erroneous initiation">
        <sequence resource="EMBL-CDS" id="BAS78900"/>
    </conflict>
    <text>Extended N-terminus.</text>
</comment>
<evidence type="ECO:0000250" key="1">
    <source>
        <dbReference type="UniProtKB" id="Q5HZ54"/>
    </source>
</evidence>
<evidence type="ECO:0000250" key="2">
    <source>
        <dbReference type="UniProtKB" id="Q9SRN4"/>
    </source>
</evidence>
<evidence type="ECO:0000255" key="3">
    <source>
        <dbReference type="PROSITE-ProRule" id="PRU00224"/>
    </source>
</evidence>
<evidence type="ECO:0000256" key="4">
    <source>
        <dbReference type="SAM" id="MobiDB-lite"/>
    </source>
</evidence>
<evidence type="ECO:0000269" key="5">
    <source>
    </source>
</evidence>
<evidence type="ECO:0000303" key="6">
    <source>
    </source>
</evidence>
<evidence type="ECO:0000305" key="7"/>
<evidence type="ECO:0000312" key="8">
    <source>
        <dbReference type="EMBL" id="BAS78900.1"/>
    </source>
</evidence>